<sequence length="232" mass="25898">MNYELVFLAAGQGKRMNAQKNKMWLELVGEPIFIHALRPFLADNRCSKVIVVSQEEERKHVKELMSQLNVAESRIEIVKGGSERQYSVAAGLERCGTERVVLVHDGARPFITLDIIDRLLIGVEQSKAAICAVKVKDTVKRVVKGVVQETVDRENLWQVQTPQAFELPILRKAHQLARKEQFLGTDEASLVERLPCPVAIVQGSYYNIKLTTPEDMPLAKAILGELGGIAND</sequence>
<evidence type="ECO:0000250" key="1"/>
<evidence type="ECO:0000305" key="2"/>
<dbReference type="EC" id="2.7.7.60"/>
<dbReference type="EMBL" id="AE017262">
    <property type="protein sequence ID" value="AAT03034.1"/>
    <property type="molecule type" value="Genomic_DNA"/>
</dbReference>
<dbReference type="RefSeq" id="WP_003728084.1">
    <property type="nucleotide sequence ID" value="NC_002973.6"/>
</dbReference>
<dbReference type="SMR" id="Q724H7"/>
<dbReference type="KEGG" id="lmf:LMOf2365_0247"/>
<dbReference type="HOGENOM" id="CLU_061281_2_2_9"/>
<dbReference type="UniPathway" id="UPA00056">
    <property type="reaction ID" value="UER00093"/>
</dbReference>
<dbReference type="GO" id="GO:0050518">
    <property type="term" value="F:2-C-methyl-D-erythritol 4-phosphate cytidylyltransferase activity"/>
    <property type="evidence" value="ECO:0007669"/>
    <property type="project" value="UniProtKB-UniRule"/>
</dbReference>
<dbReference type="GO" id="GO:0019288">
    <property type="term" value="P:isopentenyl diphosphate biosynthetic process, methylerythritol 4-phosphate pathway"/>
    <property type="evidence" value="ECO:0007669"/>
    <property type="project" value="UniProtKB-UniRule"/>
</dbReference>
<dbReference type="CDD" id="cd02516">
    <property type="entry name" value="CDP-ME_synthetase"/>
    <property type="match status" value="1"/>
</dbReference>
<dbReference type="FunFam" id="3.90.550.10:FF:000003">
    <property type="entry name" value="2-C-methyl-D-erythritol 4-phosphate cytidylyltransferase"/>
    <property type="match status" value="1"/>
</dbReference>
<dbReference type="Gene3D" id="3.90.550.10">
    <property type="entry name" value="Spore Coat Polysaccharide Biosynthesis Protein SpsA, Chain A"/>
    <property type="match status" value="1"/>
</dbReference>
<dbReference type="HAMAP" id="MF_00108">
    <property type="entry name" value="IspD"/>
    <property type="match status" value="1"/>
</dbReference>
<dbReference type="InterPro" id="IPR001228">
    <property type="entry name" value="IspD"/>
</dbReference>
<dbReference type="InterPro" id="IPR034683">
    <property type="entry name" value="IspD/TarI"/>
</dbReference>
<dbReference type="InterPro" id="IPR050088">
    <property type="entry name" value="IspD/TarI_cytidylyltransf_bact"/>
</dbReference>
<dbReference type="InterPro" id="IPR018294">
    <property type="entry name" value="ISPD_synthase_CS"/>
</dbReference>
<dbReference type="InterPro" id="IPR029044">
    <property type="entry name" value="Nucleotide-diphossugar_trans"/>
</dbReference>
<dbReference type="NCBIfam" id="TIGR00453">
    <property type="entry name" value="ispD"/>
    <property type="match status" value="1"/>
</dbReference>
<dbReference type="NCBIfam" id="NF009924">
    <property type="entry name" value="PRK13385.1"/>
    <property type="match status" value="1"/>
</dbReference>
<dbReference type="PANTHER" id="PTHR32125">
    <property type="entry name" value="2-C-METHYL-D-ERYTHRITOL 4-PHOSPHATE CYTIDYLYLTRANSFERASE, CHLOROPLASTIC"/>
    <property type="match status" value="1"/>
</dbReference>
<dbReference type="PANTHER" id="PTHR32125:SF4">
    <property type="entry name" value="2-C-METHYL-D-ERYTHRITOL 4-PHOSPHATE CYTIDYLYLTRANSFERASE, CHLOROPLASTIC"/>
    <property type="match status" value="1"/>
</dbReference>
<dbReference type="Pfam" id="PF01128">
    <property type="entry name" value="IspD"/>
    <property type="match status" value="1"/>
</dbReference>
<dbReference type="SUPFAM" id="SSF53448">
    <property type="entry name" value="Nucleotide-diphospho-sugar transferases"/>
    <property type="match status" value="1"/>
</dbReference>
<dbReference type="PROSITE" id="PS01295">
    <property type="entry name" value="ISPD"/>
    <property type="match status" value="1"/>
</dbReference>
<proteinExistence type="inferred from homology"/>
<comment type="function">
    <text evidence="1">Catalyzes the formation of 4-diphosphocytidyl-2-C-methyl-D-erythritol from CTP and 2-C-methyl-D-erythritol 4-phosphate (MEP).</text>
</comment>
<comment type="catalytic activity">
    <reaction>
        <text>2-C-methyl-D-erythritol 4-phosphate + CTP + H(+) = 4-CDP-2-C-methyl-D-erythritol + diphosphate</text>
        <dbReference type="Rhea" id="RHEA:13429"/>
        <dbReference type="ChEBI" id="CHEBI:15378"/>
        <dbReference type="ChEBI" id="CHEBI:33019"/>
        <dbReference type="ChEBI" id="CHEBI:37563"/>
        <dbReference type="ChEBI" id="CHEBI:57823"/>
        <dbReference type="ChEBI" id="CHEBI:58262"/>
        <dbReference type="EC" id="2.7.7.60"/>
    </reaction>
</comment>
<comment type="pathway">
    <text>Isoprenoid biosynthesis; isopentenyl diphosphate biosynthesis via DXP pathway; isopentenyl diphosphate from 1-deoxy-D-xylulose 5-phosphate: step 2/6.</text>
</comment>
<comment type="similarity">
    <text evidence="2">Belongs to the IspD/TarI cytidylyltransferase family. IspD subfamily.</text>
</comment>
<protein>
    <recommendedName>
        <fullName>2-C-methyl-D-erythritol 4-phosphate cytidylyltransferase</fullName>
        <ecNumber>2.7.7.60</ecNumber>
    </recommendedName>
    <alternativeName>
        <fullName>4-diphosphocytidyl-2C-methyl-D-erythritol synthase</fullName>
    </alternativeName>
    <alternativeName>
        <fullName>MEP cytidylyltransferase</fullName>
        <shortName>MCT</shortName>
    </alternativeName>
</protein>
<reference key="1">
    <citation type="journal article" date="2004" name="Nucleic Acids Res.">
        <title>Whole genome comparisons of serotype 4b and 1/2a strains of the food-borne pathogen Listeria monocytogenes reveal new insights into the core genome components of this species.</title>
        <authorList>
            <person name="Nelson K.E."/>
            <person name="Fouts D.E."/>
            <person name="Mongodin E.F."/>
            <person name="Ravel J."/>
            <person name="DeBoy R.T."/>
            <person name="Kolonay J.F."/>
            <person name="Rasko D.A."/>
            <person name="Angiuoli S.V."/>
            <person name="Gill S.R."/>
            <person name="Paulsen I.T."/>
            <person name="Peterson J.D."/>
            <person name="White O."/>
            <person name="Nelson W.C."/>
            <person name="Nierman W.C."/>
            <person name="Beanan M.J."/>
            <person name="Brinkac L.M."/>
            <person name="Daugherty S.C."/>
            <person name="Dodson R.J."/>
            <person name="Durkin A.S."/>
            <person name="Madupu R."/>
            <person name="Haft D.H."/>
            <person name="Selengut J."/>
            <person name="Van Aken S.E."/>
            <person name="Khouri H.M."/>
            <person name="Fedorova N."/>
            <person name="Forberger H.A."/>
            <person name="Tran B."/>
            <person name="Kathariou S."/>
            <person name="Wonderling L.D."/>
            <person name="Uhlich G.A."/>
            <person name="Bayles D.O."/>
            <person name="Luchansky J.B."/>
            <person name="Fraser C.M."/>
        </authorList>
    </citation>
    <scope>NUCLEOTIDE SEQUENCE [LARGE SCALE GENOMIC DNA]</scope>
    <source>
        <strain>F2365</strain>
    </source>
</reference>
<organism>
    <name type="scientific">Listeria monocytogenes serotype 4b (strain F2365)</name>
    <dbReference type="NCBI Taxonomy" id="265669"/>
    <lineage>
        <taxon>Bacteria</taxon>
        <taxon>Bacillati</taxon>
        <taxon>Bacillota</taxon>
        <taxon>Bacilli</taxon>
        <taxon>Bacillales</taxon>
        <taxon>Listeriaceae</taxon>
        <taxon>Listeria</taxon>
    </lineage>
</organism>
<gene>
    <name type="primary">ispD</name>
    <name type="ordered locus">LMOf2365_0247</name>
</gene>
<feature type="chain" id="PRO_0000075585" description="2-C-methyl-D-erythritol 4-phosphate cytidylyltransferase">
    <location>
        <begin position="1"/>
        <end position="232"/>
    </location>
</feature>
<feature type="site" description="Transition state stabilizer" evidence="1">
    <location>
        <position position="15"/>
    </location>
</feature>
<feature type="site" description="Transition state stabilizer" evidence="1">
    <location>
        <position position="22"/>
    </location>
</feature>
<feature type="site" description="Positions MEP for the nucleophilic attack" evidence="1">
    <location>
        <position position="153"/>
    </location>
</feature>
<feature type="site" description="Positions MEP for the nucleophilic attack" evidence="1">
    <location>
        <position position="209"/>
    </location>
</feature>
<keyword id="KW-0414">Isoprene biosynthesis</keyword>
<keyword id="KW-0548">Nucleotidyltransferase</keyword>
<keyword id="KW-0808">Transferase</keyword>
<accession>Q724H7</accession>
<name>ISPD_LISMF</name>